<name>FOLD_RALN1</name>
<gene>
    <name evidence="1" type="primary">folD</name>
    <name type="ordered locus">RSc1596</name>
</gene>
<accession>Q8XZ10</accession>
<sequence>MTAQLIDGNALAKQLRTEAAQRAAALTARGHQPGLAVILVGDDPASQVYVRNKIKACEDNGFLSIFDRYPADLTEADLLGRIDALNRDPRIHGILVQLPLPKHIDSHKVLEAIAPEKDVDGFHVANAGALMTGAPLFRPCTPYGCMKMLESIDYPVRGARAVVVGASNIVGKPMAMLLLQAGATVTICNSKTRDLAAHTREADIVVAAVGRRNIITADMVKPGAVVIDVGMNRDDAGKLCGDVDFAGVRDVAGHITPVPGGVGPMTITMLLINTLEAAERAAEDAALAA</sequence>
<evidence type="ECO:0000255" key="1">
    <source>
        <dbReference type="HAMAP-Rule" id="MF_01576"/>
    </source>
</evidence>
<proteinExistence type="inferred from homology"/>
<dbReference type="EC" id="1.5.1.5" evidence="1"/>
<dbReference type="EC" id="3.5.4.9" evidence="1"/>
<dbReference type="EMBL" id="AL646052">
    <property type="protein sequence ID" value="CAD15298.1"/>
    <property type="molecule type" value="Genomic_DNA"/>
</dbReference>
<dbReference type="RefSeq" id="WP_011001538.1">
    <property type="nucleotide sequence ID" value="NC_003295.1"/>
</dbReference>
<dbReference type="SMR" id="Q8XZ10"/>
<dbReference type="STRING" id="267608.RSc1596"/>
<dbReference type="EnsemblBacteria" id="CAD15298">
    <property type="protein sequence ID" value="CAD15298"/>
    <property type="gene ID" value="RSc1596"/>
</dbReference>
<dbReference type="KEGG" id="rso:RSc1596"/>
<dbReference type="eggNOG" id="COG0190">
    <property type="taxonomic scope" value="Bacteria"/>
</dbReference>
<dbReference type="HOGENOM" id="CLU_034045_2_1_4"/>
<dbReference type="UniPathway" id="UPA00193"/>
<dbReference type="Proteomes" id="UP000001436">
    <property type="component" value="Chromosome"/>
</dbReference>
<dbReference type="GO" id="GO:0005829">
    <property type="term" value="C:cytosol"/>
    <property type="evidence" value="ECO:0007669"/>
    <property type="project" value="TreeGrafter"/>
</dbReference>
<dbReference type="GO" id="GO:0004477">
    <property type="term" value="F:methenyltetrahydrofolate cyclohydrolase activity"/>
    <property type="evidence" value="ECO:0007669"/>
    <property type="project" value="UniProtKB-UniRule"/>
</dbReference>
<dbReference type="GO" id="GO:0004488">
    <property type="term" value="F:methylenetetrahydrofolate dehydrogenase (NADP+) activity"/>
    <property type="evidence" value="ECO:0007669"/>
    <property type="project" value="UniProtKB-UniRule"/>
</dbReference>
<dbReference type="GO" id="GO:0000105">
    <property type="term" value="P:L-histidine biosynthetic process"/>
    <property type="evidence" value="ECO:0007669"/>
    <property type="project" value="UniProtKB-KW"/>
</dbReference>
<dbReference type="GO" id="GO:0009086">
    <property type="term" value="P:methionine biosynthetic process"/>
    <property type="evidence" value="ECO:0007669"/>
    <property type="project" value="UniProtKB-KW"/>
</dbReference>
<dbReference type="GO" id="GO:0006164">
    <property type="term" value="P:purine nucleotide biosynthetic process"/>
    <property type="evidence" value="ECO:0007669"/>
    <property type="project" value="UniProtKB-KW"/>
</dbReference>
<dbReference type="GO" id="GO:0035999">
    <property type="term" value="P:tetrahydrofolate interconversion"/>
    <property type="evidence" value="ECO:0007669"/>
    <property type="project" value="UniProtKB-UniRule"/>
</dbReference>
<dbReference type="CDD" id="cd01080">
    <property type="entry name" value="NAD_bind_m-THF_DH_Cyclohyd"/>
    <property type="match status" value="1"/>
</dbReference>
<dbReference type="FunFam" id="3.40.50.720:FF:000094">
    <property type="entry name" value="Bifunctional protein FolD"/>
    <property type="match status" value="1"/>
</dbReference>
<dbReference type="FunFam" id="3.40.50.10860:FF:000005">
    <property type="entry name" value="C-1-tetrahydrofolate synthase, cytoplasmic, putative"/>
    <property type="match status" value="1"/>
</dbReference>
<dbReference type="Gene3D" id="3.40.50.10860">
    <property type="entry name" value="Leucine Dehydrogenase, chain A, domain 1"/>
    <property type="match status" value="1"/>
</dbReference>
<dbReference type="Gene3D" id="3.40.50.720">
    <property type="entry name" value="NAD(P)-binding Rossmann-like Domain"/>
    <property type="match status" value="1"/>
</dbReference>
<dbReference type="HAMAP" id="MF_01576">
    <property type="entry name" value="THF_DHG_CYH"/>
    <property type="match status" value="1"/>
</dbReference>
<dbReference type="InterPro" id="IPR046346">
    <property type="entry name" value="Aminoacid_DH-like_N_sf"/>
</dbReference>
<dbReference type="InterPro" id="IPR036291">
    <property type="entry name" value="NAD(P)-bd_dom_sf"/>
</dbReference>
<dbReference type="InterPro" id="IPR000672">
    <property type="entry name" value="THF_DH/CycHdrlase"/>
</dbReference>
<dbReference type="InterPro" id="IPR020630">
    <property type="entry name" value="THF_DH/CycHdrlase_cat_dom"/>
</dbReference>
<dbReference type="InterPro" id="IPR020867">
    <property type="entry name" value="THF_DH/CycHdrlase_CS"/>
</dbReference>
<dbReference type="InterPro" id="IPR020631">
    <property type="entry name" value="THF_DH/CycHdrlase_NAD-bd_dom"/>
</dbReference>
<dbReference type="NCBIfam" id="NF008058">
    <property type="entry name" value="PRK10792.1"/>
    <property type="match status" value="1"/>
</dbReference>
<dbReference type="NCBIfam" id="NF010783">
    <property type="entry name" value="PRK14186.1"/>
    <property type="match status" value="1"/>
</dbReference>
<dbReference type="NCBIfam" id="NF010786">
    <property type="entry name" value="PRK14189.1"/>
    <property type="match status" value="1"/>
</dbReference>
<dbReference type="PANTHER" id="PTHR48099:SF5">
    <property type="entry name" value="C-1-TETRAHYDROFOLATE SYNTHASE, CYTOPLASMIC"/>
    <property type="match status" value="1"/>
</dbReference>
<dbReference type="PANTHER" id="PTHR48099">
    <property type="entry name" value="C-1-TETRAHYDROFOLATE SYNTHASE, CYTOPLASMIC-RELATED"/>
    <property type="match status" value="1"/>
</dbReference>
<dbReference type="Pfam" id="PF00763">
    <property type="entry name" value="THF_DHG_CYH"/>
    <property type="match status" value="1"/>
</dbReference>
<dbReference type="Pfam" id="PF02882">
    <property type="entry name" value="THF_DHG_CYH_C"/>
    <property type="match status" value="1"/>
</dbReference>
<dbReference type="PRINTS" id="PR00085">
    <property type="entry name" value="THFDHDRGNASE"/>
</dbReference>
<dbReference type="SUPFAM" id="SSF53223">
    <property type="entry name" value="Aminoacid dehydrogenase-like, N-terminal domain"/>
    <property type="match status" value="1"/>
</dbReference>
<dbReference type="SUPFAM" id="SSF51735">
    <property type="entry name" value="NAD(P)-binding Rossmann-fold domains"/>
    <property type="match status" value="1"/>
</dbReference>
<dbReference type="PROSITE" id="PS00766">
    <property type="entry name" value="THF_DHG_CYH_1"/>
    <property type="match status" value="1"/>
</dbReference>
<dbReference type="PROSITE" id="PS00767">
    <property type="entry name" value="THF_DHG_CYH_2"/>
    <property type="match status" value="1"/>
</dbReference>
<feature type="chain" id="PRO_0000268458" description="Bifunctional protein FolD">
    <location>
        <begin position="1"/>
        <end position="289"/>
    </location>
</feature>
<feature type="binding site" evidence="1">
    <location>
        <begin position="165"/>
        <end position="167"/>
    </location>
    <ligand>
        <name>NADP(+)</name>
        <dbReference type="ChEBI" id="CHEBI:58349"/>
    </ligand>
</feature>
<feature type="binding site" evidence="1">
    <location>
        <position position="190"/>
    </location>
    <ligand>
        <name>NADP(+)</name>
        <dbReference type="ChEBI" id="CHEBI:58349"/>
    </ligand>
</feature>
<reference key="1">
    <citation type="journal article" date="2002" name="Nature">
        <title>Genome sequence of the plant pathogen Ralstonia solanacearum.</title>
        <authorList>
            <person name="Salanoubat M."/>
            <person name="Genin S."/>
            <person name="Artiguenave F."/>
            <person name="Gouzy J."/>
            <person name="Mangenot S."/>
            <person name="Arlat M."/>
            <person name="Billault A."/>
            <person name="Brottier P."/>
            <person name="Camus J.-C."/>
            <person name="Cattolico L."/>
            <person name="Chandler M."/>
            <person name="Choisne N."/>
            <person name="Claudel-Renard C."/>
            <person name="Cunnac S."/>
            <person name="Demange N."/>
            <person name="Gaspin C."/>
            <person name="Lavie M."/>
            <person name="Moisan A."/>
            <person name="Robert C."/>
            <person name="Saurin W."/>
            <person name="Schiex T."/>
            <person name="Siguier P."/>
            <person name="Thebault P."/>
            <person name="Whalen M."/>
            <person name="Wincker P."/>
            <person name="Levy M."/>
            <person name="Weissenbach J."/>
            <person name="Boucher C.A."/>
        </authorList>
    </citation>
    <scope>NUCLEOTIDE SEQUENCE [LARGE SCALE GENOMIC DNA]</scope>
    <source>
        <strain>ATCC BAA-1114 / GMI1000</strain>
    </source>
</reference>
<organism>
    <name type="scientific">Ralstonia nicotianae (strain ATCC BAA-1114 / GMI1000)</name>
    <name type="common">Ralstonia solanacearum</name>
    <dbReference type="NCBI Taxonomy" id="267608"/>
    <lineage>
        <taxon>Bacteria</taxon>
        <taxon>Pseudomonadati</taxon>
        <taxon>Pseudomonadota</taxon>
        <taxon>Betaproteobacteria</taxon>
        <taxon>Burkholderiales</taxon>
        <taxon>Burkholderiaceae</taxon>
        <taxon>Ralstonia</taxon>
        <taxon>Ralstonia solanacearum species complex</taxon>
    </lineage>
</organism>
<protein>
    <recommendedName>
        <fullName evidence="1">Bifunctional protein FolD</fullName>
    </recommendedName>
    <domain>
        <recommendedName>
            <fullName evidence="1">Methylenetetrahydrofolate dehydrogenase</fullName>
            <ecNumber evidence="1">1.5.1.5</ecNumber>
        </recommendedName>
    </domain>
    <domain>
        <recommendedName>
            <fullName evidence="1">Methenyltetrahydrofolate cyclohydrolase</fullName>
            <ecNumber evidence="1">3.5.4.9</ecNumber>
        </recommendedName>
    </domain>
</protein>
<keyword id="KW-0028">Amino-acid biosynthesis</keyword>
<keyword id="KW-0368">Histidine biosynthesis</keyword>
<keyword id="KW-0378">Hydrolase</keyword>
<keyword id="KW-0486">Methionine biosynthesis</keyword>
<keyword id="KW-0511">Multifunctional enzyme</keyword>
<keyword id="KW-0521">NADP</keyword>
<keyword id="KW-0554">One-carbon metabolism</keyword>
<keyword id="KW-0560">Oxidoreductase</keyword>
<keyword id="KW-0658">Purine biosynthesis</keyword>
<keyword id="KW-1185">Reference proteome</keyword>
<comment type="function">
    <text evidence="1">Catalyzes the oxidation of 5,10-methylenetetrahydrofolate to 5,10-methenyltetrahydrofolate and then the hydrolysis of 5,10-methenyltetrahydrofolate to 10-formyltetrahydrofolate.</text>
</comment>
<comment type="catalytic activity">
    <reaction evidence="1">
        <text>(6R)-5,10-methylene-5,6,7,8-tetrahydrofolate + NADP(+) = (6R)-5,10-methenyltetrahydrofolate + NADPH</text>
        <dbReference type="Rhea" id="RHEA:22812"/>
        <dbReference type="ChEBI" id="CHEBI:15636"/>
        <dbReference type="ChEBI" id="CHEBI:57455"/>
        <dbReference type="ChEBI" id="CHEBI:57783"/>
        <dbReference type="ChEBI" id="CHEBI:58349"/>
        <dbReference type="EC" id="1.5.1.5"/>
    </reaction>
</comment>
<comment type="catalytic activity">
    <reaction evidence="1">
        <text>(6R)-5,10-methenyltetrahydrofolate + H2O = (6R)-10-formyltetrahydrofolate + H(+)</text>
        <dbReference type="Rhea" id="RHEA:23700"/>
        <dbReference type="ChEBI" id="CHEBI:15377"/>
        <dbReference type="ChEBI" id="CHEBI:15378"/>
        <dbReference type="ChEBI" id="CHEBI:57455"/>
        <dbReference type="ChEBI" id="CHEBI:195366"/>
        <dbReference type="EC" id="3.5.4.9"/>
    </reaction>
</comment>
<comment type="pathway">
    <text evidence="1">One-carbon metabolism; tetrahydrofolate interconversion.</text>
</comment>
<comment type="subunit">
    <text evidence="1">Homodimer.</text>
</comment>
<comment type="similarity">
    <text evidence="1">Belongs to the tetrahydrofolate dehydrogenase/cyclohydrolase family.</text>
</comment>